<sequence>MATVSMRDMLKAGVHFGHQTRYWNPKMKPFIFGARNKVHIINLEKTVPMFNEALAELNKIASRKGKILFVGTKRAASEAVKDAALSCDQFFVNHRWLGGMLTNWKTVRQSIKRLKDLETQSQDGTFDKLTKKEALMRTRELEKLENSLGGIKDMGGLPDALFVIDADHEHIAIKEANNLGIPVFAIVDTNSDPDGVDFVIPGNDDAIRAVTLYLGAVAATVREGRSQDLASQAEESFVEAE</sequence>
<reference key="1">
    <citation type="journal article" date="2001" name="Nature">
        <title>Genome sequence of enterohaemorrhagic Escherichia coli O157:H7.</title>
        <authorList>
            <person name="Perna N.T."/>
            <person name="Plunkett G. III"/>
            <person name="Burland V."/>
            <person name="Mau B."/>
            <person name="Glasner J.D."/>
            <person name="Rose D.J."/>
            <person name="Mayhew G.F."/>
            <person name="Evans P.S."/>
            <person name="Gregor J."/>
            <person name="Kirkpatrick H.A."/>
            <person name="Posfai G."/>
            <person name="Hackett J."/>
            <person name="Klink S."/>
            <person name="Boutin A."/>
            <person name="Shao Y."/>
            <person name="Miller L."/>
            <person name="Grotbeck E.J."/>
            <person name="Davis N.W."/>
            <person name="Lim A."/>
            <person name="Dimalanta E.T."/>
            <person name="Potamousis K."/>
            <person name="Apodaca J."/>
            <person name="Anantharaman T.S."/>
            <person name="Lin J."/>
            <person name="Yen G."/>
            <person name="Schwartz D.C."/>
            <person name="Welch R.A."/>
            <person name="Blattner F.R."/>
        </authorList>
    </citation>
    <scope>NUCLEOTIDE SEQUENCE [LARGE SCALE GENOMIC DNA]</scope>
    <source>
        <strain>O157:H7 / EDL933 / ATCC 700927 / EHEC</strain>
    </source>
</reference>
<reference key="2">
    <citation type="journal article" date="2001" name="DNA Res.">
        <title>Complete genome sequence of enterohemorrhagic Escherichia coli O157:H7 and genomic comparison with a laboratory strain K-12.</title>
        <authorList>
            <person name="Hayashi T."/>
            <person name="Makino K."/>
            <person name="Ohnishi M."/>
            <person name="Kurokawa K."/>
            <person name="Ishii K."/>
            <person name="Yokoyama K."/>
            <person name="Han C.-G."/>
            <person name="Ohtsubo E."/>
            <person name="Nakayama K."/>
            <person name="Murata T."/>
            <person name="Tanaka M."/>
            <person name="Tobe T."/>
            <person name="Iida T."/>
            <person name="Takami H."/>
            <person name="Honda T."/>
            <person name="Sasakawa C."/>
            <person name="Ogasawara N."/>
            <person name="Yasunaga T."/>
            <person name="Kuhara S."/>
            <person name="Shiba T."/>
            <person name="Hattori M."/>
            <person name="Shinagawa H."/>
        </authorList>
    </citation>
    <scope>NUCLEOTIDE SEQUENCE [LARGE SCALE GENOMIC DNA]</scope>
    <source>
        <strain>O157:H7 / Sakai / RIMD 0509952 / EHEC</strain>
    </source>
</reference>
<name>RS2_ECO57</name>
<evidence type="ECO:0000250" key="1"/>
<evidence type="ECO:0000305" key="2"/>
<gene>
    <name type="primary">rpsB</name>
    <name type="ordered locus">Z0180</name>
    <name type="ordered locus">ECs0171</name>
</gene>
<protein>
    <recommendedName>
        <fullName evidence="2">Small ribosomal subunit protein uS2</fullName>
    </recommendedName>
    <alternativeName>
        <fullName>30S ribosomal protein S2</fullName>
    </alternativeName>
</protein>
<feature type="initiator methionine" description="Removed" evidence="1">
    <location>
        <position position="1"/>
    </location>
</feature>
<feature type="chain" id="PRO_0000134167" description="Small ribosomal subunit protein uS2">
    <location>
        <begin position="2"/>
        <end position="241"/>
    </location>
</feature>
<keyword id="KW-1185">Reference proteome</keyword>
<keyword id="KW-0687">Ribonucleoprotein</keyword>
<keyword id="KW-0689">Ribosomal protein</keyword>
<organism>
    <name type="scientific">Escherichia coli O157:H7</name>
    <dbReference type="NCBI Taxonomy" id="83334"/>
    <lineage>
        <taxon>Bacteria</taxon>
        <taxon>Pseudomonadati</taxon>
        <taxon>Pseudomonadota</taxon>
        <taxon>Gammaproteobacteria</taxon>
        <taxon>Enterobacterales</taxon>
        <taxon>Enterobacteriaceae</taxon>
        <taxon>Escherichia</taxon>
    </lineage>
</organism>
<accession>P0A7V2</accession>
<accession>P02351</accession>
<accession>Q9R2E5</accession>
<proteinExistence type="inferred from homology"/>
<dbReference type="EMBL" id="AE005174">
    <property type="protein sequence ID" value="AAG54471.1"/>
    <property type="molecule type" value="Genomic_DNA"/>
</dbReference>
<dbReference type="EMBL" id="BA000007">
    <property type="protein sequence ID" value="BAB33594.1"/>
    <property type="molecule type" value="Genomic_DNA"/>
</dbReference>
<dbReference type="PIR" id="C85501">
    <property type="entry name" value="C85501"/>
</dbReference>
<dbReference type="PIR" id="C90650">
    <property type="entry name" value="C90650"/>
</dbReference>
<dbReference type="RefSeq" id="NP_308198.1">
    <property type="nucleotide sequence ID" value="NC_002695.1"/>
</dbReference>
<dbReference type="RefSeq" id="WP_000246882.1">
    <property type="nucleotide sequence ID" value="NZ_VOAI01000002.1"/>
</dbReference>
<dbReference type="EMDB" id="EMD-8175"/>
<dbReference type="SMR" id="P0A7V2"/>
<dbReference type="STRING" id="155864.Z0180"/>
<dbReference type="GeneID" id="89519558"/>
<dbReference type="GeneID" id="913849"/>
<dbReference type="KEGG" id="ece:Z0180"/>
<dbReference type="KEGG" id="ecs:ECs_0171"/>
<dbReference type="PATRIC" id="fig|386585.9.peg.272"/>
<dbReference type="eggNOG" id="COG0052">
    <property type="taxonomic scope" value="Bacteria"/>
</dbReference>
<dbReference type="HOGENOM" id="CLU_040318_1_2_6"/>
<dbReference type="OMA" id="PYIFMEK"/>
<dbReference type="Proteomes" id="UP000000558">
    <property type="component" value="Chromosome"/>
</dbReference>
<dbReference type="Proteomes" id="UP000002519">
    <property type="component" value="Chromosome"/>
</dbReference>
<dbReference type="GO" id="GO:0022627">
    <property type="term" value="C:cytosolic small ribosomal subunit"/>
    <property type="evidence" value="ECO:0007669"/>
    <property type="project" value="TreeGrafter"/>
</dbReference>
<dbReference type="GO" id="GO:0003735">
    <property type="term" value="F:structural constituent of ribosome"/>
    <property type="evidence" value="ECO:0007669"/>
    <property type="project" value="InterPro"/>
</dbReference>
<dbReference type="GO" id="GO:0006412">
    <property type="term" value="P:translation"/>
    <property type="evidence" value="ECO:0007669"/>
    <property type="project" value="UniProtKB-UniRule"/>
</dbReference>
<dbReference type="CDD" id="cd01425">
    <property type="entry name" value="RPS2"/>
    <property type="match status" value="1"/>
</dbReference>
<dbReference type="FunFam" id="1.10.287.610:FF:000001">
    <property type="entry name" value="30S ribosomal protein S2"/>
    <property type="match status" value="1"/>
</dbReference>
<dbReference type="Gene3D" id="3.40.50.10490">
    <property type="entry name" value="Glucose-6-phosphate isomerase like protein, domain 1"/>
    <property type="match status" value="1"/>
</dbReference>
<dbReference type="Gene3D" id="1.10.287.610">
    <property type="entry name" value="Helix hairpin bin"/>
    <property type="match status" value="1"/>
</dbReference>
<dbReference type="HAMAP" id="MF_00291_B">
    <property type="entry name" value="Ribosomal_uS2_B"/>
    <property type="match status" value="1"/>
</dbReference>
<dbReference type="InterPro" id="IPR001865">
    <property type="entry name" value="Ribosomal_uS2"/>
</dbReference>
<dbReference type="InterPro" id="IPR005706">
    <property type="entry name" value="Ribosomal_uS2_bac/mit/plastid"/>
</dbReference>
<dbReference type="InterPro" id="IPR018130">
    <property type="entry name" value="Ribosomal_uS2_CS"/>
</dbReference>
<dbReference type="InterPro" id="IPR023591">
    <property type="entry name" value="Ribosomal_uS2_flav_dom_sf"/>
</dbReference>
<dbReference type="NCBIfam" id="TIGR01011">
    <property type="entry name" value="rpsB_bact"/>
    <property type="match status" value="1"/>
</dbReference>
<dbReference type="PANTHER" id="PTHR12534">
    <property type="entry name" value="30S RIBOSOMAL PROTEIN S2 PROKARYOTIC AND ORGANELLAR"/>
    <property type="match status" value="1"/>
</dbReference>
<dbReference type="PANTHER" id="PTHR12534:SF0">
    <property type="entry name" value="SMALL RIBOSOMAL SUBUNIT PROTEIN US2M"/>
    <property type="match status" value="1"/>
</dbReference>
<dbReference type="Pfam" id="PF00318">
    <property type="entry name" value="Ribosomal_S2"/>
    <property type="match status" value="1"/>
</dbReference>
<dbReference type="PRINTS" id="PR00395">
    <property type="entry name" value="RIBOSOMALS2"/>
</dbReference>
<dbReference type="SUPFAM" id="SSF52313">
    <property type="entry name" value="Ribosomal protein S2"/>
    <property type="match status" value="1"/>
</dbReference>
<dbReference type="PROSITE" id="PS00962">
    <property type="entry name" value="RIBOSOMAL_S2_1"/>
    <property type="match status" value="1"/>
</dbReference>
<dbReference type="PROSITE" id="PS00963">
    <property type="entry name" value="RIBOSOMAL_S2_2"/>
    <property type="match status" value="1"/>
</dbReference>
<comment type="subunit">
    <text evidence="1">Part of the 30S ribosomal subunit. Some nascent polypeptide chains are able to cross-link to this protein in situ (By similarity).</text>
</comment>
<comment type="similarity">
    <text evidence="2">Belongs to the universal ribosomal protein uS2 family.</text>
</comment>